<sequence>MGRSRKKGPYVDRKLLEKIRKLNETGEKKVIKTWSRASMIIPEMVGHTIAVYNGMKHIPVYITENMIGHRLGEFAPTRRFGGHADKKAKKGELKK</sequence>
<feature type="chain" id="PRO_0000129925" description="Small ribosomal subunit protein uS19">
    <location>
        <begin position="1"/>
        <end position="95"/>
    </location>
</feature>
<feature type="region of interest" description="Disordered" evidence="2">
    <location>
        <begin position="76"/>
        <end position="95"/>
    </location>
</feature>
<feature type="compositionally biased region" description="Basic and acidic residues" evidence="2">
    <location>
        <begin position="82"/>
        <end position="95"/>
    </location>
</feature>
<feature type="sequence conflict" description="In Ref. 1; CAA79781." evidence="3" ref="1">
    <original>EM</original>
    <variation>KW</variation>
    <location>
        <begin position="43"/>
        <end position="44"/>
    </location>
</feature>
<feature type="sequence conflict" description="In Ref. 1; CAA79781." evidence="3" ref="1">
    <original>T</original>
    <variation>G</variation>
    <location>
        <position position="48"/>
    </location>
</feature>
<evidence type="ECO:0000250" key="1"/>
<evidence type="ECO:0000256" key="2">
    <source>
        <dbReference type="SAM" id="MobiDB-lite"/>
    </source>
</evidence>
<evidence type="ECO:0000305" key="3"/>
<dbReference type="EMBL" id="Z21677">
    <property type="protein sequence ID" value="CAA79781.1"/>
    <property type="molecule type" value="Genomic_DNA"/>
</dbReference>
<dbReference type="EMBL" id="AE000512">
    <property type="protein sequence ID" value="AAD36562.1"/>
    <property type="molecule type" value="Genomic_DNA"/>
</dbReference>
<dbReference type="PIR" id="H72249">
    <property type="entry name" value="H72249"/>
</dbReference>
<dbReference type="RefSeq" id="NP_229296.1">
    <property type="nucleotide sequence ID" value="NC_000853.1"/>
</dbReference>
<dbReference type="RefSeq" id="WP_004081828.1">
    <property type="nucleotide sequence ID" value="NC_000853.1"/>
</dbReference>
<dbReference type="SMR" id="P38520"/>
<dbReference type="FunCoup" id="P38520">
    <property type="interactions" value="374"/>
</dbReference>
<dbReference type="STRING" id="243274.TM_1496"/>
<dbReference type="PaxDb" id="243274-THEMA_06820"/>
<dbReference type="EnsemblBacteria" id="AAD36562">
    <property type="protein sequence ID" value="AAD36562"/>
    <property type="gene ID" value="TM_1496"/>
</dbReference>
<dbReference type="KEGG" id="tma:TM1496"/>
<dbReference type="KEGG" id="tmi:THEMA_06820"/>
<dbReference type="KEGG" id="tmm:Tmari_1504"/>
<dbReference type="KEGG" id="tmw:THMA_1528"/>
<dbReference type="eggNOG" id="COG0185">
    <property type="taxonomic scope" value="Bacteria"/>
</dbReference>
<dbReference type="InParanoid" id="P38520"/>
<dbReference type="OrthoDB" id="9797833at2"/>
<dbReference type="Proteomes" id="UP000008183">
    <property type="component" value="Chromosome"/>
</dbReference>
<dbReference type="GO" id="GO:0005737">
    <property type="term" value="C:cytoplasm"/>
    <property type="evidence" value="ECO:0007669"/>
    <property type="project" value="UniProtKB-ARBA"/>
</dbReference>
<dbReference type="GO" id="GO:0015935">
    <property type="term" value="C:small ribosomal subunit"/>
    <property type="evidence" value="ECO:0007669"/>
    <property type="project" value="InterPro"/>
</dbReference>
<dbReference type="GO" id="GO:0019843">
    <property type="term" value="F:rRNA binding"/>
    <property type="evidence" value="ECO:0007669"/>
    <property type="project" value="UniProtKB-UniRule"/>
</dbReference>
<dbReference type="GO" id="GO:0003735">
    <property type="term" value="F:structural constituent of ribosome"/>
    <property type="evidence" value="ECO:0000318"/>
    <property type="project" value="GO_Central"/>
</dbReference>
<dbReference type="GO" id="GO:0000028">
    <property type="term" value="P:ribosomal small subunit assembly"/>
    <property type="evidence" value="ECO:0000318"/>
    <property type="project" value="GO_Central"/>
</dbReference>
<dbReference type="GO" id="GO:0006412">
    <property type="term" value="P:translation"/>
    <property type="evidence" value="ECO:0007669"/>
    <property type="project" value="UniProtKB-UniRule"/>
</dbReference>
<dbReference type="FunFam" id="3.30.860.10:FF:000001">
    <property type="entry name" value="30S ribosomal protein S19"/>
    <property type="match status" value="1"/>
</dbReference>
<dbReference type="Gene3D" id="3.30.860.10">
    <property type="entry name" value="30s Ribosomal Protein S19, Chain A"/>
    <property type="match status" value="1"/>
</dbReference>
<dbReference type="HAMAP" id="MF_00531">
    <property type="entry name" value="Ribosomal_uS19"/>
    <property type="match status" value="1"/>
</dbReference>
<dbReference type="InterPro" id="IPR002222">
    <property type="entry name" value="Ribosomal_uS19"/>
</dbReference>
<dbReference type="InterPro" id="IPR005732">
    <property type="entry name" value="Ribosomal_uS19_bac-type"/>
</dbReference>
<dbReference type="InterPro" id="IPR020934">
    <property type="entry name" value="Ribosomal_uS19_CS"/>
</dbReference>
<dbReference type="InterPro" id="IPR023575">
    <property type="entry name" value="Ribosomal_uS19_SF"/>
</dbReference>
<dbReference type="NCBIfam" id="TIGR01050">
    <property type="entry name" value="rpsS_bact"/>
    <property type="match status" value="1"/>
</dbReference>
<dbReference type="PANTHER" id="PTHR11880">
    <property type="entry name" value="RIBOSOMAL PROTEIN S19P FAMILY MEMBER"/>
    <property type="match status" value="1"/>
</dbReference>
<dbReference type="PANTHER" id="PTHR11880:SF8">
    <property type="entry name" value="SMALL RIBOSOMAL SUBUNIT PROTEIN US19M"/>
    <property type="match status" value="1"/>
</dbReference>
<dbReference type="Pfam" id="PF00203">
    <property type="entry name" value="Ribosomal_S19"/>
    <property type="match status" value="1"/>
</dbReference>
<dbReference type="PIRSF" id="PIRSF002144">
    <property type="entry name" value="Ribosomal_S19"/>
    <property type="match status" value="1"/>
</dbReference>
<dbReference type="PRINTS" id="PR00975">
    <property type="entry name" value="RIBOSOMALS19"/>
</dbReference>
<dbReference type="SUPFAM" id="SSF54570">
    <property type="entry name" value="Ribosomal protein S19"/>
    <property type="match status" value="1"/>
</dbReference>
<dbReference type="PROSITE" id="PS00323">
    <property type="entry name" value="RIBOSOMAL_S19"/>
    <property type="match status" value="1"/>
</dbReference>
<gene>
    <name type="primary">rpsS</name>
    <name type="ordered locus">TM_1496</name>
</gene>
<accession>P38520</accession>
<proteinExistence type="inferred from homology"/>
<comment type="function">
    <text evidence="1">Protein S19 forms a complex with S13 that binds strongly to the 16S ribosomal RNA.</text>
</comment>
<comment type="similarity">
    <text evidence="3">Belongs to the universal ribosomal protein uS19 family.</text>
</comment>
<protein>
    <recommendedName>
        <fullName evidence="3">Small ribosomal subunit protein uS19</fullName>
    </recommendedName>
    <alternativeName>
        <fullName>30S ribosomal protein S19</fullName>
    </alternativeName>
</protein>
<keyword id="KW-1185">Reference proteome</keyword>
<keyword id="KW-0687">Ribonucleoprotein</keyword>
<keyword id="KW-0689">Ribosomal protein</keyword>
<keyword id="KW-0694">RNA-binding</keyword>
<keyword id="KW-0699">rRNA-binding</keyword>
<organism>
    <name type="scientific">Thermotoga maritima (strain ATCC 43589 / DSM 3109 / JCM 10099 / NBRC 100826 / MSB8)</name>
    <dbReference type="NCBI Taxonomy" id="243274"/>
    <lineage>
        <taxon>Bacteria</taxon>
        <taxon>Thermotogati</taxon>
        <taxon>Thermotogota</taxon>
        <taxon>Thermotogae</taxon>
        <taxon>Thermotogales</taxon>
        <taxon>Thermotogaceae</taxon>
        <taxon>Thermotoga</taxon>
    </lineage>
</organism>
<name>RS19_THEMA</name>
<reference key="1">
    <citation type="journal article" date="1994" name="J. Bacteriol.">
        <title>Phylogenetic depth of S10 and spc operons: cloning and sequencing of a ribosomal protein gene cluster from the extremely thermophilic bacterium Thermotoga maritima.</title>
        <authorList>
            <person name="Sanangelantoni A.M."/>
            <person name="Bocchetta M."/>
            <person name="Cammarano P."/>
            <person name="Tiboni O."/>
        </authorList>
    </citation>
    <scope>NUCLEOTIDE SEQUENCE [GENOMIC DNA]</scope>
    <source>
        <strain>ATCC 43589 / DSM 3109 / JCM 10099 / NBRC 100826 / MSB8</strain>
    </source>
</reference>
<reference key="2">
    <citation type="journal article" date="1999" name="Nature">
        <title>Evidence for lateral gene transfer between Archaea and Bacteria from genome sequence of Thermotoga maritima.</title>
        <authorList>
            <person name="Nelson K.E."/>
            <person name="Clayton R.A."/>
            <person name="Gill S.R."/>
            <person name="Gwinn M.L."/>
            <person name="Dodson R.J."/>
            <person name="Haft D.H."/>
            <person name="Hickey E.K."/>
            <person name="Peterson J.D."/>
            <person name="Nelson W.C."/>
            <person name="Ketchum K.A."/>
            <person name="McDonald L.A."/>
            <person name="Utterback T.R."/>
            <person name="Malek J.A."/>
            <person name="Linher K.D."/>
            <person name="Garrett M.M."/>
            <person name="Stewart A.M."/>
            <person name="Cotton M.D."/>
            <person name="Pratt M.S."/>
            <person name="Phillips C.A."/>
            <person name="Richardson D.L."/>
            <person name="Heidelberg J.F."/>
            <person name="Sutton G.G."/>
            <person name="Fleischmann R.D."/>
            <person name="Eisen J.A."/>
            <person name="White O."/>
            <person name="Salzberg S.L."/>
            <person name="Smith H.O."/>
            <person name="Venter J.C."/>
            <person name="Fraser C.M."/>
        </authorList>
    </citation>
    <scope>NUCLEOTIDE SEQUENCE [LARGE SCALE GENOMIC DNA]</scope>
    <source>
        <strain>ATCC 43589 / DSM 3109 / JCM 10099 / NBRC 100826 / MSB8</strain>
    </source>
</reference>